<name>T200_SALTY</name>
<keyword id="KW-0233">DNA recombination</keyword>
<keyword id="KW-0238">DNA-binding</keyword>
<keyword id="KW-0255">Endonuclease</keyword>
<keyword id="KW-0378">Hydrolase</keyword>
<keyword id="KW-0460">Magnesium</keyword>
<keyword id="KW-0479">Metal-binding</keyword>
<keyword id="KW-0540">Nuclease</keyword>
<keyword id="KW-1185">Reference proteome</keyword>
<keyword id="KW-0814">Transposable element</keyword>
<keyword id="KW-0815">Transposition</keyword>
<dbReference type="EMBL" id="Z54217">
    <property type="protein sequence ID" value="CAA90952.1"/>
    <property type="molecule type" value="Genomic_DNA"/>
</dbReference>
<dbReference type="EMBL" id="L25848">
    <property type="protein sequence ID" value="AAC36995.1"/>
    <property type="molecule type" value="Unassigned_DNA"/>
</dbReference>
<dbReference type="EMBL" id="AF025380">
    <property type="protein sequence ID" value="AAB81521.1"/>
    <property type="molecule type" value="Genomic_DNA"/>
</dbReference>
<dbReference type="EMBL" id="U44749">
    <property type="protein sequence ID" value="AAA86759.1"/>
    <property type="molecule type" value="Genomic_DNA"/>
</dbReference>
<dbReference type="EMBL" id="AF093749">
    <property type="protein sequence ID" value="AAC78110.1"/>
    <property type="molecule type" value="Genomic_DNA"/>
</dbReference>
<dbReference type="EMBL" id="AE006468">
    <property type="protein sequence ID" value="AAL19882.1"/>
    <property type="molecule type" value="Genomic_DNA"/>
</dbReference>
<dbReference type="EMBL" id="AE006468">
    <property type="protein sequence ID" value="AAL20869.1"/>
    <property type="molecule type" value="Genomic_DNA"/>
</dbReference>
<dbReference type="EMBL" id="AE006468">
    <property type="protein sequence ID" value="AAL21365.1"/>
    <property type="molecule type" value="Genomic_DNA"/>
</dbReference>
<dbReference type="EMBL" id="AE006468">
    <property type="protein sequence ID" value="AAL21908.1"/>
    <property type="molecule type" value="Genomic_DNA"/>
</dbReference>
<dbReference type="EMBL" id="AE006468">
    <property type="protein sequence ID" value="AAL22341.1"/>
    <property type="molecule type" value="Genomic_DNA"/>
</dbReference>
<dbReference type="EMBL" id="AE006468">
    <property type="protein sequence ID" value="AAL23135.1"/>
    <property type="molecule type" value="Genomic_DNA"/>
</dbReference>
<dbReference type="SMR" id="P59696"/>
<dbReference type="STRING" id="99287.STM0946"/>
<dbReference type="PaxDb" id="99287-STM0946"/>
<dbReference type="DNASU" id="1255837"/>
<dbReference type="KEGG" id="stm:STM0946"/>
<dbReference type="KEGG" id="stm:STM1957"/>
<dbReference type="KEGG" id="stm:STM2471"/>
<dbReference type="KEGG" id="stm:STM3032"/>
<dbReference type="KEGG" id="stm:STM3479"/>
<dbReference type="KEGG" id="stm:STM4311"/>
<dbReference type="PATRIC" id="fig|99287.12.peg.2609"/>
<dbReference type="HOGENOM" id="CLU_101320_0_0_6"/>
<dbReference type="PhylomeDB" id="P59696"/>
<dbReference type="BioCyc" id="SENT99287:STM4311-MONOMER"/>
<dbReference type="Proteomes" id="UP000001014">
    <property type="component" value="Chromosome"/>
</dbReference>
<dbReference type="GO" id="GO:0003677">
    <property type="term" value="F:DNA binding"/>
    <property type="evidence" value="ECO:0007669"/>
    <property type="project" value="UniProtKB-KW"/>
</dbReference>
<dbReference type="GO" id="GO:0004519">
    <property type="term" value="F:endonuclease activity"/>
    <property type="evidence" value="ECO:0007669"/>
    <property type="project" value="UniProtKB-KW"/>
</dbReference>
<dbReference type="GO" id="GO:0046872">
    <property type="term" value="F:metal ion binding"/>
    <property type="evidence" value="ECO:0007669"/>
    <property type="project" value="UniProtKB-KW"/>
</dbReference>
<dbReference type="GO" id="GO:0004803">
    <property type="term" value="F:transposase activity"/>
    <property type="evidence" value="ECO:0000318"/>
    <property type="project" value="GO_Central"/>
</dbReference>
<dbReference type="GO" id="GO:0006313">
    <property type="term" value="P:DNA transposition"/>
    <property type="evidence" value="ECO:0000318"/>
    <property type="project" value="GO_Central"/>
</dbReference>
<dbReference type="Gene3D" id="3.30.70.1290">
    <property type="entry name" value="Transposase IS200-like"/>
    <property type="match status" value="1"/>
</dbReference>
<dbReference type="InterPro" id="IPR002686">
    <property type="entry name" value="Transposase_17"/>
</dbReference>
<dbReference type="InterPro" id="IPR036515">
    <property type="entry name" value="Transposase_17_sf"/>
</dbReference>
<dbReference type="NCBIfam" id="NF033573">
    <property type="entry name" value="transpos_IS200"/>
    <property type="match status" value="1"/>
</dbReference>
<dbReference type="PANTHER" id="PTHR33360">
    <property type="entry name" value="TRANSPOSASE FOR INSERTION SEQUENCE ELEMENT IS200"/>
    <property type="match status" value="1"/>
</dbReference>
<dbReference type="PANTHER" id="PTHR33360:SF2">
    <property type="entry name" value="TRANSPOSASE FOR INSERTION SEQUENCE ELEMENT IS200"/>
    <property type="match status" value="1"/>
</dbReference>
<dbReference type="Pfam" id="PF01797">
    <property type="entry name" value="Y1_Tnp"/>
    <property type="match status" value="1"/>
</dbReference>
<dbReference type="SMART" id="SM01321">
    <property type="entry name" value="Y1_Tnp"/>
    <property type="match status" value="1"/>
</dbReference>
<dbReference type="SUPFAM" id="SSF143422">
    <property type="entry name" value="Transposase IS200-like"/>
    <property type="match status" value="1"/>
</dbReference>
<organism>
    <name type="scientific">Salmonella typhimurium (strain LT2 / SGSC1412 / ATCC 700720)</name>
    <dbReference type="NCBI Taxonomy" id="99287"/>
    <lineage>
        <taxon>Bacteria</taxon>
        <taxon>Pseudomonadati</taxon>
        <taxon>Pseudomonadota</taxon>
        <taxon>Gammaproteobacteria</taxon>
        <taxon>Enterobacterales</taxon>
        <taxon>Enterobacteriaceae</taxon>
        <taxon>Salmonella</taxon>
    </lineage>
</organism>
<proteinExistence type="inferred from homology"/>
<accession>P59696</accession>
<accession>Q57334</accession>
<protein>
    <recommendedName>
        <fullName>Transposase for insertion sequence element IS200</fullName>
    </recommendedName>
</protein>
<evidence type="ECO:0000250" key="1">
    <source>
        <dbReference type="UniProtKB" id="Q7DF83"/>
    </source>
</evidence>
<evidence type="ECO:0000305" key="2"/>
<sequence length="152" mass="17958">MGDEKSLAHTRWNCKYHIVFAPKYRRQAFYGEKRRAVGSILRKLCEWKNVRILEAECCADHIHMLLEIPPKMSVSSFMGYLKGKSSLMLYEQFGDLKFKYRNREFWCRGYYVDTVGKNTAKIQDYIKHQLEEDKMGEQLSIPYPGSPFTGRK</sequence>
<reference key="1">
    <citation type="submission" date="1996-01" db="EMBL/GenBank/DDBJ databases">
        <title>Salmonella typhimurium carries a conserved IS200 insertion between the flagellar genes fliA and fliB.</title>
        <authorList>
            <person name="Burnens A.P."/>
            <person name="Stanley J."/>
            <person name="Hunziker P."/>
            <person name="Brodard I."/>
            <person name="Nicolet J."/>
        </authorList>
    </citation>
    <scope>NUCLEOTIDE SEQUENCE [GENOMIC DNA]</scope>
    <source>
        <strain>LT2 / ATCC 23564</strain>
    </source>
</reference>
<reference key="2">
    <citation type="journal article" date="1993" name="J. Bacteriol.">
        <title>The ancestry of insertion sequences common to Escherichia coli and Salmonella typhimurium.</title>
        <authorList>
            <person name="Bisercic M."/>
            <person name="Ochman H."/>
        </authorList>
    </citation>
    <scope>NUCLEOTIDE SEQUENCE [GENOMIC DNA]</scope>
    <source>
        <strain>SARA17</strain>
    </source>
</reference>
<reference key="3">
    <citation type="journal article" date="1999" name="J. Bacteriol.">
        <title>The 17-gene ethanolamine (eut) operon of Salmonella typhimurium encodes five homologues of carboxysome shell proteins.</title>
        <authorList>
            <person name="Kofoid E.C."/>
            <person name="Rappleye C.A."/>
            <person name="Stojiljkovic I."/>
            <person name="Roth J.R."/>
        </authorList>
    </citation>
    <scope>NUCLEOTIDE SEQUENCE [GENOMIC DNA]</scope>
    <source>
        <strain>LT2</strain>
    </source>
</reference>
<reference key="4">
    <citation type="journal article" date="2001" name="Nature">
        <title>Complete genome sequence of Salmonella enterica serovar Typhimurium LT2.</title>
        <authorList>
            <person name="McClelland M."/>
            <person name="Sanderson K.E."/>
            <person name="Spieth J."/>
            <person name="Clifton S.W."/>
            <person name="Latreille P."/>
            <person name="Courtney L."/>
            <person name="Porwollik S."/>
            <person name="Ali J."/>
            <person name="Dante M."/>
            <person name="Du F."/>
            <person name="Hou S."/>
            <person name="Layman D."/>
            <person name="Leonard S."/>
            <person name="Nguyen C."/>
            <person name="Scott K."/>
            <person name="Holmes A."/>
            <person name="Grewal N."/>
            <person name="Mulvaney E."/>
            <person name="Ryan E."/>
            <person name="Sun H."/>
            <person name="Florea L."/>
            <person name="Miller W."/>
            <person name="Stoneking T."/>
            <person name="Nhan M."/>
            <person name="Waterston R."/>
            <person name="Wilson R.K."/>
        </authorList>
    </citation>
    <scope>NUCLEOTIDE SEQUENCE [LARGE SCALE GENOMIC DNA]</scope>
    <source>
        <strain>LT2 / SGSC1412 / ATCC 700720</strain>
    </source>
</reference>
<gene>
    <name type="primary">tnpA1</name>
    <name type="ordered locus">STM0946</name>
</gene>
<gene>
    <name type="primary">tnpA2</name>
    <name type="ordered locus">STM1957</name>
</gene>
<gene>
    <name type="primary">tnpA3</name>
    <name type="ordered locus">STM2471</name>
</gene>
<gene>
    <name type="primary">tnpA4</name>
    <name type="ordered locus">STM3032</name>
</gene>
<gene>
    <name type="primary">tnpA5</name>
    <name type="ordered locus">STM3479</name>
</gene>
<gene>
    <name type="primary">tnpA6</name>
    <name type="ordered locus">STM4311</name>
</gene>
<comment type="function">
    <text evidence="1">Transposase responsible for transposition of the IS200 insertion sequence (IS) element. Transposition occurs in 2 main steps, excision from the donor DNA 'top strand' into a single strand circle and its subsequent reinsertion into the DNA target. This increases the copy number of the IS.</text>
</comment>
<comment type="cofactor">
    <cofactor evidence="1">
        <name>Mg(2+)</name>
        <dbReference type="ChEBI" id="CHEBI:18420"/>
    </cofactor>
</comment>
<comment type="subunit">
    <text evidence="1">Homodimer.</text>
</comment>
<comment type="miscellaneous">
    <text evidence="2">Belongs to the IS200/IS605 insertion sequence (IS) element family.</text>
</comment>
<comment type="similarity">
    <text evidence="2">Belongs to the transposase 17 family.</text>
</comment>
<feature type="chain" id="PRO_0000075490" description="Transposase for insertion sequence element IS200">
    <location>
        <begin position="1"/>
        <end position="152"/>
    </location>
</feature>
<feature type="active site" description="Nucleophile" evidence="1">
    <location>
        <position position="125"/>
    </location>
</feature>
<feature type="binding site" evidence="1">
    <location>
        <position position="61"/>
    </location>
    <ligand>
        <name>Mg(2+)</name>
        <dbReference type="ChEBI" id="CHEBI:18420"/>
    </ligand>
</feature>
<feature type="binding site" evidence="1">
    <location>
        <position position="63"/>
    </location>
    <ligand>
        <name>Mg(2+)</name>
        <dbReference type="ChEBI" id="CHEBI:18420"/>
    </ligand>
</feature>
<feature type="binding site" evidence="1">
    <location>
        <position position="129"/>
    </location>
    <ligand>
        <name>Mg(2+)</name>
        <dbReference type="ChEBI" id="CHEBI:18420"/>
    </ligand>
</feature>